<accession>Q03JH6</accession>
<comment type="function">
    <text evidence="1">Catalyzes the reversible conversion of 3-phosphohydroxypyruvate to phosphoserine and of 3-hydroxy-2-oxo-4-phosphonooxybutanoate to phosphohydroxythreonine.</text>
</comment>
<comment type="catalytic activity">
    <reaction evidence="1">
        <text>O-phospho-L-serine + 2-oxoglutarate = 3-phosphooxypyruvate + L-glutamate</text>
        <dbReference type="Rhea" id="RHEA:14329"/>
        <dbReference type="ChEBI" id="CHEBI:16810"/>
        <dbReference type="ChEBI" id="CHEBI:18110"/>
        <dbReference type="ChEBI" id="CHEBI:29985"/>
        <dbReference type="ChEBI" id="CHEBI:57524"/>
        <dbReference type="EC" id="2.6.1.52"/>
    </reaction>
</comment>
<comment type="catalytic activity">
    <reaction evidence="1">
        <text>4-(phosphooxy)-L-threonine + 2-oxoglutarate = (R)-3-hydroxy-2-oxo-4-phosphooxybutanoate + L-glutamate</text>
        <dbReference type="Rhea" id="RHEA:16573"/>
        <dbReference type="ChEBI" id="CHEBI:16810"/>
        <dbReference type="ChEBI" id="CHEBI:29985"/>
        <dbReference type="ChEBI" id="CHEBI:58452"/>
        <dbReference type="ChEBI" id="CHEBI:58538"/>
        <dbReference type="EC" id="2.6.1.52"/>
    </reaction>
</comment>
<comment type="cofactor">
    <cofactor evidence="1">
        <name>pyridoxal 5'-phosphate</name>
        <dbReference type="ChEBI" id="CHEBI:597326"/>
    </cofactor>
    <text evidence="1">Binds 1 pyridoxal phosphate per subunit.</text>
</comment>
<comment type="pathway">
    <text evidence="1">Amino-acid biosynthesis; L-serine biosynthesis; L-serine from 3-phospho-D-glycerate: step 2/3.</text>
</comment>
<comment type="subunit">
    <text evidence="1">Homodimer.</text>
</comment>
<comment type="subcellular location">
    <subcellularLocation>
        <location evidence="1">Cytoplasm</location>
    </subcellularLocation>
</comment>
<comment type="similarity">
    <text evidence="1">Belongs to the class-V pyridoxal-phosphate-dependent aminotransferase family. SerC subfamily.</text>
</comment>
<dbReference type="EC" id="2.6.1.52" evidence="1"/>
<dbReference type="EMBL" id="CP000419">
    <property type="protein sequence ID" value="ABJ66646.1"/>
    <property type="molecule type" value="Genomic_DNA"/>
</dbReference>
<dbReference type="RefSeq" id="WP_011227455.1">
    <property type="nucleotide sequence ID" value="NC_008532.1"/>
</dbReference>
<dbReference type="SMR" id="Q03JH6"/>
<dbReference type="GeneID" id="66899277"/>
<dbReference type="KEGG" id="ste:STER_1489"/>
<dbReference type="HOGENOM" id="CLU_034866_0_2_9"/>
<dbReference type="UniPathway" id="UPA00135">
    <property type="reaction ID" value="UER00197"/>
</dbReference>
<dbReference type="GO" id="GO:0005737">
    <property type="term" value="C:cytoplasm"/>
    <property type="evidence" value="ECO:0007669"/>
    <property type="project" value="UniProtKB-SubCell"/>
</dbReference>
<dbReference type="GO" id="GO:0004648">
    <property type="term" value="F:O-phospho-L-serine:2-oxoglutarate aminotransferase activity"/>
    <property type="evidence" value="ECO:0007669"/>
    <property type="project" value="UniProtKB-UniRule"/>
</dbReference>
<dbReference type="GO" id="GO:0030170">
    <property type="term" value="F:pyridoxal phosphate binding"/>
    <property type="evidence" value="ECO:0007669"/>
    <property type="project" value="UniProtKB-UniRule"/>
</dbReference>
<dbReference type="GO" id="GO:0006564">
    <property type="term" value="P:L-serine biosynthetic process"/>
    <property type="evidence" value="ECO:0007669"/>
    <property type="project" value="UniProtKB-UniRule"/>
</dbReference>
<dbReference type="FunFam" id="3.40.640.10:FF:000010">
    <property type="entry name" value="Phosphoserine aminotransferase"/>
    <property type="match status" value="1"/>
</dbReference>
<dbReference type="FunFam" id="3.90.1150.10:FF:000006">
    <property type="entry name" value="Phosphoserine aminotransferase"/>
    <property type="match status" value="1"/>
</dbReference>
<dbReference type="Gene3D" id="3.90.1150.10">
    <property type="entry name" value="Aspartate Aminotransferase, domain 1"/>
    <property type="match status" value="1"/>
</dbReference>
<dbReference type="Gene3D" id="3.40.640.10">
    <property type="entry name" value="Type I PLP-dependent aspartate aminotransferase-like (Major domain)"/>
    <property type="match status" value="1"/>
</dbReference>
<dbReference type="HAMAP" id="MF_00160">
    <property type="entry name" value="SerC_aminotrans_5"/>
    <property type="match status" value="1"/>
</dbReference>
<dbReference type="InterPro" id="IPR000192">
    <property type="entry name" value="Aminotrans_V_dom"/>
</dbReference>
<dbReference type="InterPro" id="IPR022278">
    <property type="entry name" value="Pser_aminoTfrase"/>
</dbReference>
<dbReference type="InterPro" id="IPR015424">
    <property type="entry name" value="PyrdxlP-dep_Trfase"/>
</dbReference>
<dbReference type="InterPro" id="IPR015421">
    <property type="entry name" value="PyrdxlP-dep_Trfase_major"/>
</dbReference>
<dbReference type="InterPro" id="IPR015422">
    <property type="entry name" value="PyrdxlP-dep_Trfase_small"/>
</dbReference>
<dbReference type="NCBIfam" id="NF003764">
    <property type="entry name" value="PRK05355.1"/>
    <property type="match status" value="1"/>
</dbReference>
<dbReference type="NCBIfam" id="TIGR01364">
    <property type="entry name" value="serC_1"/>
    <property type="match status" value="1"/>
</dbReference>
<dbReference type="PANTHER" id="PTHR43247">
    <property type="entry name" value="PHOSPHOSERINE AMINOTRANSFERASE"/>
    <property type="match status" value="1"/>
</dbReference>
<dbReference type="PANTHER" id="PTHR43247:SF1">
    <property type="entry name" value="PHOSPHOSERINE AMINOTRANSFERASE"/>
    <property type="match status" value="1"/>
</dbReference>
<dbReference type="Pfam" id="PF00266">
    <property type="entry name" value="Aminotran_5"/>
    <property type="match status" value="1"/>
</dbReference>
<dbReference type="PIRSF" id="PIRSF000525">
    <property type="entry name" value="SerC"/>
    <property type="match status" value="1"/>
</dbReference>
<dbReference type="SUPFAM" id="SSF53383">
    <property type="entry name" value="PLP-dependent transferases"/>
    <property type="match status" value="1"/>
</dbReference>
<feature type="chain" id="PRO_1000058226" description="Phosphoserine aminotransferase">
    <location>
        <begin position="1"/>
        <end position="364"/>
    </location>
</feature>
<feature type="binding site" evidence="1">
    <location>
        <position position="41"/>
    </location>
    <ligand>
        <name>L-glutamate</name>
        <dbReference type="ChEBI" id="CHEBI:29985"/>
    </ligand>
</feature>
<feature type="binding site" evidence="1">
    <location>
        <begin position="75"/>
        <end position="76"/>
    </location>
    <ligand>
        <name>pyridoxal 5'-phosphate</name>
        <dbReference type="ChEBI" id="CHEBI:597326"/>
    </ligand>
</feature>
<feature type="binding site" evidence="1">
    <location>
        <position position="100"/>
    </location>
    <ligand>
        <name>pyridoxal 5'-phosphate</name>
        <dbReference type="ChEBI" id="CHEBI:597326"/>
    </ligand>
</feature>
<feature type="binding site" evidence="1">
    <location>
        <position position="155"/>
    </location>
    <ligand>
        <name>pyridoxal 5'-phosphate</name>
        <dbReference type="ChEBI" id="CHEBI:597326"/>
    </ligand>
</feature>
<feature type="binding site" evidence="1">
    <location>
        <position position="175"/>
    </location>
    <ligand>
        <name>pyridoxal 5'-phosphate</name>
        <dbReference type="ChEBI" id="CHEBI:597326"/>
    </ligand>
</feature>
<feature type="binding site" evidence="1">
    <location>
        <position position="198"/>
    </location>
    <ligand>
        <name>pyridoxal 5'-phosphate</name>
        <dbReference type="ChEBI" id="CHEBI:597326"/>
    </ligand>
</feature>
<feature type="binding site" evidence="1">
    <location>
        <begin position="239"/>
        <end position="240"/>
    </location>
    <ligand>
        <name>pyridoxal 5'-phosphate</name>
        <dbReference type="ChEBI" id="CHEBI:597326"/>
    </ligand>
</feature>
<feature type="modified residue" description="N6-(pyridoxal phosphate)lysine" evidence="1">
    <location>
        <position position="199"/>
    </location>
</feature>
<name>SERC_STRTD</name>
<protein>
    <recommendedName>
        <fullName evidence="1">Phosphoserine aminotransferase</fullName>
        <ecNumber evidence="1">2.6.1.52</ecNumber>
    </recommendedName>
    <alternativeName>
        <fullName evidence="1">Phosphohydroxythreonine aminotransferase</fullName>
        <shortName evidence="1">PSAT</shortName>
    </alternativeName>
</protein>
<gene>
    <name evidence="1" type="primary">serC</name>
    <name type="ordered locus">STER_1489</name>
</gene>
<evidence type="ECO:0000255" key="1">
    <source>
        <dbReference type="HAMAP-Rule" id="MF_00160"/>
    </source>
</evidence>
<reference key="1">
    <citation type="journal article" date="2006" name="Proc. Natl. Acad. Sci. U.S.A.">
        <title>Comparative genomics of the lactic acid bacteria.</title>
        <authorList>
            <person name="Makarova K.S."/>
            <person name="Slesarev A."/>
            <person name="Wolf Y.I."/>
            <person name="Sorokin A."/>
            <person name="Mirkin B."/>
            <person name="Koonin E.V."/>
            <person name="Pavlov A."/>
            <person name="Pavlova N."/>
            <person name="Karamychev V."/>
            <person name="Polouchine N."/>
            <person name="Shakhova V."/>
            <person name="Grigoriev I."/>
            <person name="Lou Y."/>
            <person name="Rohksar D."/>
            <person name="Lucas S."/>
            <person name="Huang K."/>
            <person name="Goodstein D.M."/>
            <person name="Hawkins T."/>
            <person name="Plengvidhya V."/>
            <person name="Welker D."/>
            <person name="Hughes J."/>
            <person name="Goh Y."/>
            <person name="Benson A."/>
            <person name="Baldwin K."/>
            <person name="Lee J.-H."/>
            <person name="Diaz-Muniz I."/>
            <person name="Dosti B."/>
            <person name="Smeianov V."/>
            <person name="Wechter W."/>
            <person name="Barabote R."/>
            <person name="Lorca G."/>
            <person name="Altermann E."/>
            <person name="Barrangou R."/>
            <person name="Ganesan B."/>
            <person name="Xie Y."/>
            <person name="Rawsthorne H."/>
            <person name="Tamir D."/>
            <person name="Parker C."/>
            <person name="Breidt F."/>
            <person name="Broadbent J.R."/>
            <person name="Hutkins R."/>
            <person name="O'Sullivan D."/>
            <person name="Steele J."/>
            <person name="Unlu G."/>
            <person name="Saier M.H. Jr."/>
            <person name="Klaenhammer T."/>
            <person name="Richardson P."/>
            <person name="Kozyavkin S."/>
            <person name="Weimer B.C."/>
            <person name="Mills D.A."/>
        </authorList>
    </citation>
    <scope>NUCLEOTIDE SEQUENCE [LARGE SCALE GENOMIC DNA]</scope>
    <source>
        <strain>ATCC BAA-491 / LMD-9</strain>
    </source>
</reference>
<sequence>MTIYNFSAGPATLPKPVLEKAQAELLNYQDSGMSVLEMSHRSPEFDKIIKDAEATLRELMAIPDNYKVIFLQGGASTQFTMVPLNLAQGKKAYYLVGGSWGKKAYTEAVKLSKTIPFEPILLASSEDTVYDHIPSFDPSTIDPEAAYVHLTTNNTIEGTSIYDLPDTNGVPIVADMSSNILAARYNVEDFALIYAGAQKNIGPAGVTVVIVREDFLNDQPQLSAMLDYRIQAEAGSLYNTPPCFNIYISKLVFDWVKNEIGGVDKMAEIQREKSGLLYDYIESSDFYTNPVKDAKDRSVCNIPFVTPSKDLDAKFVAEADALGFKNIKGHRSVGGMRASVYNAFPRQGVLDLIDFMKKFEDENK</sequence>
<proteinExistence type="inferred from homology"/>
<keyword id="KW-0028">Amino-acid biosynthesis</keyword>
<keyword id="KW-0032">Aminotransferase</keyword>
<keyword id="KW-0963">Cytoplasm</keyword>
<keyword id="KW-0663">Pyridoxal phosphate</keyword>
<keyword id="KW-0718">Serine biosynthesis</keyword>
<keyword id="KW-0808">Transferase</keyword>
<organism>
    <name type="scientific">Streptococcus thermophilus (strain ATCC BAA-491 / LMD-9)</name>
    <dbReference type="NCBI Taxonomy" id="322159"/>
    <lineage>
        <taxon>Bacteria</taxon>
        <taxon>Bacillati</taxon>
        <taxon>Bacillota</taxon>
        <taxon>Bacilli</taxon>
        <taxon>Lactobacillales</taxon>
        <taxon>Streptococcaceae</taxon>
        <taxon>Streptococcus</taxon>
    </lineage>
</organism>